<name>TVP23_PODAN</name>
<proteinExistence type="inferred from homology"/>
<gene>
    <name type="primary">TVP23</name>
    <name type="ordered locus">Pa_1_13630</name>
    <name type="ORF">PODANS_1_13630</name>
</gene>
<reference key="1">
    <citation type="journal article" date="2008" name="Genome Biol.">
        <title>The genome sequence of the model ascomycete fungus Podospora anserina.</title>
        <authorList>
            <person name="Espagne E."/>
            <person name="Lespinet O."/>
            <person name="Malagnac F."/>
            <person name="Da Silva C."/>
            <person name="Jaillon O."/>
            <person name="Porcel B.M."/>
            <person name="Couloux A."/>
            <person name="Aury J.-M."/>
            <person name="Segurens B."/>
            <person name="Poulain J."/>
            <person name="Anthouard V."/>
            <person name="Grossetete S."/>
            <person name="Khalili H."/>
            <person name="Coppin E."/>
            <person name="Dequard-Chablat M."/>
            <person name="Picard M."/>
            <person name="Contamine V."/>
            <person name="Arnaise S."/>
            <person name="Bourdais A."/>
            <person name="Berteaux-Lecellier V."/>
            <person name="Gautheret D."/>
            <person name="de Vries R.P."/>
            <person name="Battaglia E."/>
            <person name="Coutinho P.M."/>
            <person name="Danchin E.G.J."/>
            <person name="Henrissat B."/>
            <person name="El Khoury R."/>
            <person name="Sainsard-Chanet A."/>
            <person name="Boivin A."/>
            <person name="Pinan-Lucarre B."/>
            <person name="Sellem C.H."/>
            <person name="Debuchy R."/>
            <person name="Wincker P."/>
            <person name="Weissenbach J."/>
            <person name="Silar P."/>
        </authorList>
    </citation>
    <scope>NUCLEOTIDE SEQUENCE [LARGE SCALE GENOMIC DNA]</scope>
    <source>
        <strain>S / ATCC MYA-4624 / DSM 980 / FGSC 10383</strain>
    </source>
</reference>
<reference key="2">
    <citation type="journal article" date="2014" name="Genetics">
        <title>Maintaining two mating types: Structure of the mating type locus and its role in heterokaryosis in Podospora anserina.</title>
        <authorList>
            <person name="Grognet P."/>
            <person name="Bidard F."/>
            <person name="Kuchly C."/>
            <person name="Tong L.C.H."/>
            <person name="Coppin E."/>
            <person name="Benkhali J.A."/>
            <person name="Couloux A."/>
            <person name="Wincker P."/>
            <person name="Debuchy R."/>
            <person name="Silar P."/>
        </authorList>
    </citation>
    <scope>GENOME REANNOTATION</scope>
    <source>
        <strain>S / ATCC MYA-4624 / DSM 980 / FGSC 10383</strain>
    </source>
</reference>
<comment type="function">
    <text evidence="1">Golgi membrane protein involved in vesicular trafficking.</text>
</comment>
<comment type="subcellular location">
    <subcellularLocation>
        <location evidence="1">Golgi apparatus membrane</location>
        <topology evidence="1">Multi-pass membrane protein</topology>
    </subcellularLocation>
</comment>
<comment type="similarity">
    <text evidence="3">Belongs to the TVP23 family.</text>
</comment>
<dbReference type="EMBL" id="CU633867">
    <property type="protein sequence ID" value="CAP64973.1"/>
    <property type="molecule type" value="Genomic_DNA"/>
</dbReference>
<dbReference type="EMBL" id="FO904936">
    <property type="protein sequence ID" value="CDP23711.1"/>
    <property type="molecule type" value="Genomic_DNA"/>
</dbReference>
<dbReference type="RefSeq" id="XP_001905066.1">
    <property type="nucleotide sequence ID" value="XM_001905031.1"/>
</dbReference>
<dbReference type="FunCoup" id="B2ALT5">
    <property type="interactions" value="372"/>
</dbReference>
<dbReference type="STRING" id="515849.B2ALT5"/>
<dbReference type="GlyCosmos" id="B2ALT5">
    <property type="glycosylation" value="1 site, No reported glycans"/>
</dbReference>
<dbReference type="GeneID" id="6189198"/>
<dbReference type="KEGG" id="pan:PODANSg2088"/>
<dbReference type="VEuPathDB" id="FungiDB:PODANS_1_13630"/>
<dbReference type="eggNOG" id="KOG3195">
    <property type="taxonomic scope" value="Eukaryota"/>
</dbReference>
<dbReference type="HOGENOM" id="CLU_074845_1_1_1"/>
<dbReference type="InParanoid" id="B2ALT5"/>
<dbReference type="OrthoDB" id="2151161at2759"/>
<dbReference type="Proteomes" id="UP000001197">
    <property type="component" value="Chromosome 1"/>
</dbReference>
<dbReference type="GO" id="GO:0000139">
    <property type="term" value="C:Golgi membrane"/>
    <property type="evidence" value="ECO:0007669"/>
    <property type="project" value="UniProtKB-SubCell"/>
</dbReference>
<dbReference type="GO" id="GO:0009306">
    <property type="term" value="P:protein secretion"/>
    <property type="evidence" value="ECO:0007669"/>
    <property type="project" value="TreeGrafter"/>
</dbReference>
<dbReference type="GO" id="GO:0016192">
    <property type="term" value="P:vesicle-mediated transport"/>
    <property type="evidence" value="ECO:0007669"/>
    <property type="project" value="TreeGrafter"/>
</dbReference>
<dbReference type="InterPro" id="IPR008564">
    <property type="entry name" value="TVP23-like"/>
</dbReference>
<dbReference type="PANTHER" id="PTHR13019">
    <property type="entry name" value="GOLGI APPARATUS MEMBRANE PROTEIN TVP23"/>
    <property type="match status" value="1"/>
</dbReference>
<dbReference type="PANTHER" id="PTHR13019:SF7">
    <property type="entry name" value="GOLGI APPARATUS MEMBRANE PROTEIN TVP23"/>
    <property type="match status" value="1"/>
</dbReference>
<dbReference type="Pfam" id="PF05832">
    <property type="entry name" value="DUF846"/>
    <property type="match status" value="1"/>
</dbReference>
<sequence>MEQPQPAPGSLSWRLSSHPITLLTFLGFRVSSLLVYLFGLLFTDNLVMIFIITILLLAADFYYLKNIAGRRLVGLRWWNEVDPSTGDSHWVFESSEPGSKVINATDSRFFWIAIYAQPLFWIALAVVAVFSFKFIWLPLVAIALVLTITNSLAFSRCDKFSQASNIAGSAFNGGNLAGSIASNMVGRFFTR</sequence>
<protein>
    <recommendedName>
        <fullName>Golgi apparatus membrane protein TVP23</fullName>
    </recommendedName>
</protein>
<accession>B2ALT5</accession>
<accession>A0A090C9R9</accession>
<keyword id="KW-0325">Glycoprotein</keyword>
<keyword id="KW-0333">Golgi apparatus</keyword>
<keyword id="KW-0472">Membrane</keyword>
<keyword id="KW-1185">Reference proteome</keyword>
<keyword id="KW-0812">Transmembrane</keyword>
<keyword id="KW-1133">Transmembrane helix</keyword>
<evidence type="ECO:0000250" key="1"/>
<evidence type="ECO:0000255" key="2"/>
<evidence type="ECO:0000305" key="3"/>
<organism>
    <name type="scientific">Podospora anserina (strain S / ATCC MYA-4624 / DSM 980 / FGSC 10383)</name>
    <name type="common">Pleurage anserina</name>
    <dbReference type="NCBI Taxonomy" id="515849"/>
    <lineage>
        <taxon>Eukaryota</taxon>
        <taxon>Fungi</taxon>
        <taxon>Dikarya</taxon>
        <taxon>Ascomycota</taxon>
        <taxon>Pezizomycotina</taxon>
        <taxon>Sordariomycetes</taxon>
        <taxon>Sordariomycetidae</taxon>
        <taxon>Sordariales</taxon>
        <taxon>Podosporaceae</taxon>
        <taxon>Podospora</taxon>
        <taxon>Podospora anserina</taxon>
    </lineage>
</organism>
<feature type="chain" id="PRO_0000343055" description="Golgi apparatus membrane protein TVP23">
    <location>
        <begin position="1"/>
        <end position="191"/>
    </location>
</feature>
<feature type="transmembrane region" description="Helical" evidence="2">
    <location>
        <begin position="15"/>
        <end position="35"/>
    </location>
</feature>
<feature type="transmembrane region" description="Helical" evidence="2">
    <location>
        <begin position="37"/>
        <end position="57"/>
    </location>
</feature>
<feature type="transmembrane region" description="Helical" evidence="2">
    <location>
        <begin position="109"/>
        <end position="129"/>
    </location>
</feature>
<feature type="transmembrane region" description="Helical" evidence="2">
    <location>
        <begin position="134"/>
        <end position="154"/>
    </location>
</feature>
<feature type="glycosylation site" description="N-linked (GlcNAc...) asparagine" evidence="2">
    <location>
        <position position="103"/>
    </location>
</feature>